<comment type="function">
    <text evidence="1">Involved in ribosome biogenesis; more specifically in 18S rRNA pseudouridylation and in cleavage of pre-rRNA.</text>
</comment>
<comment type="similarity">
    <text evidence="2">Belongs to the NOP10 family.</text>
</comment>
<protein>
    <recommendedName>
        <fullName>Ribosome biogenesis protein Nop10</fullName>
    </recommendedName>
</protein>
<feature type="chain" id="PRO_0000149014" description="Ribosome biogenesis protein Nop10">
    <location>
        <begin position="1"/>
        <end position="59"/>
    </location>
</feature>
<name>NOP10_ARCFU</name>
<gene>
    <name type="primary">nop10</name>
    <name type="ordered locus">AF_0526</name>
</gene>
<reference key="1">
    <citation type="journal article" date="1997" name="Nature">
        <title>The complete genome sequence of the hyperthermophilic, sulphate-reducing archaeon Archaeoglobus fulgidus.</title>
        <authorList>
            <person name="Klenk H.-P."/>
            <person name="Clayton R.A."/>
            <person name="Tomb J.-F."/>
            <person name="White O."/>
            <person name="Nelson K.E."/>
            <person name="Ketchum K.A."/>
            <person name="Dodson R.J."/>
            <person name="Gwinn M.L."/>
            <person name="Hickey E.K."/>
            <person name="Peterson J.D."/>
            <person name="Richardson D.L."/>
            <person name="Kerlavage A.R."/>
            <person name="Graham D.E."/>
            <person name="Kyrpides N.C."/>
            <person name="Fleischmann R.D."/>
            <person name="Quackenbush J."/>
            <person name="Lee N.H."/>
            <person name="Sutton G.G."/>
            <person name="Gill S.R."/>
            <person name="Kirkness E.F."/>
            <person name="Dougherty B.A."/>
            <person name="McKenney K."/>
            <person name="Adams M.D."/>
            <person name="Loftus B.J."/>
            <person name="Peterson S.N."/>
            <person name="Reich C.I."/>
            <person name="McNeil L.K."/>
            <person name="Badger J.H."/>
            <person name="Glodek A."/>
            <person name="Zhou L."/>
            <person name="Overbeek R."/>
            <person name="Gocayne J.D."/>
            <person name="Weidman J.F."/>
            <person name="McDonald L.A."/>
            <person name="Utterback T.R."/>
            <person name="Cotton M.D."/>
            <person name="Spriggs T."/>
            <person name="Artiach P."/>
            <person name="Kaine B.P."/>
            <person name="Sykes S.M."/>
            <person name="Sadow P.W."/>
            <person name="D'Andrea K.P."/>
            <person name="Bowman C."/>
            <person name="Fujii C."/>
            <person name="Garland S.A."/>
            <person name="Mason T.M."/>
            <person name="Olsen G.J."/>
            <person name="Fraser C.M."/>
            <person name="Smith H.O."/>
            <person name="Woese C.R."/>
            <person name="Venter J.C."/>
        </authorList>
    </citation>
    <scope>NUCLEOTIDE SEQUENCE [LARGE SCALE GENOMIC DNA]</scope>
    <source>
        <strain>ATCC 49558 / DSM 4304 / JCM 9628 / NBRC 100126 / VC-16</strain>
    </source>
</reference>
<sequence length="59" mass="7155">MKVLMRKCGKCGRYTLKERCPVCGERTHMPIPPRFSIEDPYGKYRRKLRKEIGFFSFRR</sequence>
<evidence type="ECO:0000250" key="1"/>
<evidence type="ECO:0000305" key="2"/>
<proteinExistence type="inferred from homology"/>
<keyword id="KW-1185">Reference proteome</keyword>
<keyword id="KW-0687">Ribonucleoprotein</keyword>
<keyword id="KW-0690">Ribosome biogenesis</keyword>
<keyword id="KW-0698">rRNA processing</keyword>
<organism>
    <name type="scientific">Archaeoglobus fulgidus (strain ATCC 49558 / DSM 4304 / JCM 9628 / NBRC 100126 / VC-16)</name>
    <dbReference type="NCBI Taxonomy" id="224325"/>
    <lineage>
        <taxon>Archaea</taxon>
        <taxon>Methanobacteriati</taxon>
        <taxon>Methanobacteriota</taxon>
        <taxon>Archaeoglobi</taxon>
        <taxon>Archaeoglobales</taxon>
        <taxon>Archaeoglobaceae</taxon>
        <taxon>Archaeoglobus</taxon>
    </lineage>
</organism>
<dbReference type="EMBL" id="AE000782">
    <property type="protein sequence ID" value="AAB90724.1"/>
    <property type="molecule type" value="Genomic_DNA"/>
</dbReference>
<dbReference type="PIR" id="F69315">
    <property type="entry name" value="F69315"/>
</dbReference>
<dbReference type="RefSeq" id="WP_010878033.1">
    <property type="nucleotide sequence ID" value="NC_000917.1"/>
</dbReference>
<dbReference type="SMR" id="O29724"/>
<dbReference type="STRING" id="224325.AF_0526"/>
<dbReference type="PaxDb" id="224325-AF_0526"/>
<dbReference type="DNASU" id="1483743"/>
<dbReference type="EnsemblBacteria" id="AAB90724">
    <property type="protein sequence ID" value="AAB90724"/>
    <property type="gene ID" value="AF_0526"/>
</dbReference>
<dbReference type="KEGG" id="afu:AF_0526"/>
<dbReference type="eggNOG" id="arCOG00906">
    <property type="taxonomic scope" value="Archaea"/>
</dbReference>
<dbReference type="HOGENOM" id="CLU_196480_1_0_2"/>
<dbReference type="OrthoDB" id="7259at2157"/>
<dbReference type="PhylomeDB" id="O29724"/>
<dbReference type="Proteomes" id="UP000002199">
    <property type="component" value="Chromosome"/>
</dbReference>
<dbReference type="GO" id="GO:1990904">
    <property type="term" value="C:ribonucleoprotein complex"/>
    <property type="evidence" value="ECO:0007669"/>
    <property type="project" value="UniProtKB-KW"/>
</dbReference>
<dbReference type="GO" id="GO:0030515">
    <property type="term" value="F:snoRNA binding"/>
    <property type="evidence" value="ECO:0007669"/>
    <property type="project" value="InterPro"/>
</dbReference>
<dbReference type="GO" id="GO:0001522">
    <property type="term" value="P:pseudouridine synthesis"/>
    <property type="evidence" value="ECO:0007669"/>
    <property type="project" value="InterPro"/>
</dbReference>
<dbReference type="GO" id="GO:0006364">
    <property type="term" value="P:rRNA processing"/>
    <property type="evidence" value="ECO:0007669"/>
    <property type="project" value="UniProtKB-UniRule"/>
</dbReference>
<dbReference type="Gene3D" id="2.20.28.40">
    <property type="entry name" value="H/ACA ribonucleoprotein complex, subunit Nop10"/>
    <property type="match status" value="1"/>
</dbReference>
<dbReference type="HAMAP" id="MF_00803">
    <property type="entry name" value="Nop10"/>
    <property type="match status" value="1"/>
</dbReference>
<dbReference type="InterPro" id="IPR007264">
    <property type="entry name" value="H/ACA_rnp_Nop10"/>
</dbReference>
<dbReference type="InterPro" id="IPR036756">
    <property type="entry name" value="H/ACA_rnp_Nop10_sf"/>
</dbReference>
<dbReference type="InterPro" id="IPR023532">
    <property type="entry name" value="Nop10_arc-typ"/>
</dbReference>
<dbReference type="NCBIfam" id="NF009623">
    <property type="entry name" value="PRK13130.1"/>
    <property type="match status" value="1"/>
</dbReference>
<dbReference type="PANTHER" id="PTHR13305:SF0">
    <property type="entry name" value="H_ACA RIBONUCLEOPROTEIN COMPLEX SUBUNIT 3"/>
    <property type="match status" value="1"/>
</dbReference>
<dbReference type="PANTHER" id="PTHR13305">
    <property type="entry name" value="RIBOSOME BIOGENESIS PROTEIN NOP10"/>
    <property type="match status" value="1"/>
</dbReference>
<dbReference type="Pfam" id="PF04135">
    <property type="entry name" value="Nop10p"/>
    <property type="match status" value="1"/>
</dbReference>
<dbReference type="SUPFAM" id="SSF144210">
    <property type="entry name" value="Nop10-like SnoRNP"/>
    <property type="match status" value="1"/>
</dbReference>
<accession>O29724</accession>